<reference key="1">
    <citation type="journal article" date="2002" name="Lancet">
        <title>Genome and virulence determinants of high virulence community-acquired MRSA.</title>
        <authorList>
            <person name="Baba T."/>
            <person name="Takeuchi F."/>
            <person name="Kuroda M."/>
            <person name="Yuzawa H."/>
            <person name="Aoki K."/>
            <person name="Oguchi A."/>
            <person name="Nagai Y."/>
            <person name="Iwama N."/>
            <person name="Asano K."/>
            <person name="Naimi T."/>
            <person name="Kuroda H."/>
            <person name="Cui L."/>
            <person name="Yamamoto K."/>
            <person name="Hiramatsu K."/>
        </authorList>
    </citation>
    <scope>NUCLEOTIDE SEQUENCE [LARGE SCALE GENOMIC DNA]</scope>
    <source>
        <strain>MW2</strain>
    </source>
</reference>
<comment type="catalytic activity">
    <reaction evidence="1">
        <text>L-glutamate 5-semialdehyde + NAD(+) + H2O = L-glutamate + NADH + 2 H(+)</text>
        <dbReference type="Rhea" id="RHEA:30235"/>
        <dbReference type="ChEBI" id="CHEBI:15377"/>
        <dbReference type="ChEBI" id="CHEBI:15378"/>
        <dbReference type="ChEBI" id="CHEBI:29985"/>
        <dbReference type="ChEBI" id="CHEBI:57540"/>
        <dbReference type="ChEBI" id="CHEBI:57945"/>
        <dbReference type="ChEBI" id="CHEBI:58066"/>
        <dbReference type="EC" id="1.2.1.88"/>
    </reaction>
</comment>
<comment type="pathway">
    <text evidence="1">Amino-acid degradation; L-proline degradation into L-glutamate; L-glutamate from L-proline: step 2/2.</text>
</comment>
<comment type="similarity">
    <text evidence="1">Belongs to the aldehyde dehydrogenase family. RocA subfamily.</text>
</comment>
<organism>
    <name type="scientific">Staphylococcus aureus (strain MW2)</name>
    <dbReference type="NCBI Taxonomy" id="196620"/>
    <lineage>
        <taxon>Bacteria</taxon>
        <taxon>Bacillati</taxon>
        <taxon>Bacillota</taxon>
        <taxon>Bacilli</taxon>
        <taxon>Bacillales</taxon>
        <taxon>Staphylococcaceae</taxon>
        <taxon>Staphylococcus</taxon>
    </lineage>
</organism>
<gene>
    <name evidence="1" type="primary">rocA</name>
    <name type="ordered locus">MW2475</name>
</gene>
<feature type="chain" id="PRO_0000056519" description="1-pyrroline-5-carboxylate dehydrogenase">
    <location>
        <begin position="1"/>
        <end position="514"/>
    </location>
</feature>
<feature type="active site" evidence="1">
    <location>
        <position position="286"/>
    </location>
</feature>
<feature type="active site" evidence="1">
    <location>
        <position position="320"/>
    </location>
</feature>
<evidence type="ECO:0000255" key="1">
    <source>
        <dbReference type="HAMAP-Rule" id="MF_00733"/>
    </source>
</evidence>
<protein>
    <recommendedName>
        <fullName evidence="1">1-pyrroline-5-carboxylate dehydrogenase</fullName>
        <shortName evidence="1">P5C dehydrogenase</shortName>
        <ecNumber evidence="1">1.2.1.88</ecNumber>
    </recommendedName>
    <alternativeName>
        <fullName evidence="1">L-glutamate gamma-semialdehyde dehydrogenase</fullName>
    </alternativeName>
</protein>
<sequence length="514" mass="56869">MVVEFKNEPGYDFSVQENVDMFKKALKDVEKELGQDIPLVINGEKIFKDDKIKSINPADTSQVIANASKATKQDVEDAFKAADEAYKSWKTWSANDRAELMLRVSAIIRRRKAEIAAIMVYEAGKPWDEAVGDAAEGIDFIEYYARSMMDLAQGKPVLDREGEHNKYFYKSIGTGVTIPPWNFPFAIMAGTTLAPVVAGNTVLLKPAEDTPYIAYKLMEILEEAGLPKGVVNFVPGDPKEIGDYLVDHKDTHFVTFTGSRATGTRIYERSAVVQEGQNFLKRVIAEMGGKDAIVVDENIDTDMAAEAIVTSAFGFSGQKCSACSRAIVHKDVYDEVLEKSIKLTKELTLGNTVDNTYMGPVINKKQFDKIKNYIEIGKEEGKLEQGGGTDDSKGYFVEPTIISGLKSKDRIMQEEIFGPVVGFVKVNDFDEAIEVANDTDYGLTGAVITNNREHWIKAVNEFDVGNLYLNRGCTSAVVGYHPFGGFKMSGTDAKTGSPDYLLHFLEQKVVSEMF</sequence>
<keyword id="KW-0520">NAD</keyword>
<keyword id="KW-0560">Oxidoreductase</keyword>
<name>ROCA_STAAW</name>
<accession>Q8NUR2</accession>
<proteinExistence type="inferred from homology"/>
<dbReference type="EC" id="1.2.1.88" evidence="1"/>
<dbReference type="EMBL" id="BA000033">
    <property type="protein sequence ID" value="BAB96340.1"/>
    <property type="molecule type" value="Genomic_DNA"/>
</dbReference>
<dbReference type="RefSeq" id="WP_000259685.1">
    <property type="nucleotide sequence ID" value="NC_003923.1"/>
</dbReference>
<dbReference type="SMR" id="Q8NUR2"/>
<dbReference type="KEGG" id="sam:MW2475"/>
<dbReference type="HOGENOM" id="CLU_005391_0_0_9"/>
<dbReference type="UniPathway" id="UPA00261">
    <property type="reaction ID" value="UER00374"/>
</dbReference>
<dbReference type="GO" id="GO:0009898">
    <property type="term" value="C:cytoplasmic side of plasma membrane"/>
    <property type="evidence" value="ECO:0007669"/>
    <property type="project" value="TreeGrafter"/>
</dbReference>
<dbReference type="GO" id="GO:0003842">
    <property type="term" value="F:1-pyrroline-5-carboxylate dehydrogenase activity"/>
    <property type="evidence" value="ECO:0007669"/>
    <property type="project" value="UniProtKB-UniRule"/>
</dbReference>
<dbReference type="GO" id="GO:0006537">
    <property type="term" value="P:glutamate biosynthetic process"/>
    <property type="evidence" value="ECO:0007669"/>
    <property type="project" value="UniProtKB-UniRule"/>
</dbReference>
<dbReference type="GO" id="GO:0010133">
    <property type="term" value="P:proline catabolic process to glutamate"/>
    <property type="evidence" value="ECO:0007669"/>
    <property type="project" value="UniProtKB-UniPathway"/>
</dbReference>
<dbReference type="CDD" id="cd07124">
    <property type="entry name" value="ALDH_PutA-P5CDH-RocA"/>
    <property type="match status" value="1"/>
</dbReference>
<dbReference type="FunFam" id="3.40.309.10:FF:000005">
    <property type="entry name" value="1-pyrroline-5-carboxylate dehydrogenase 1"/>
    <property type="match status" value="1"/>
</dbReference>
<dbReference type="FunFam" id="3.40.605.10:FF:000045">
    <property type="entry name" value="1-pyrroline-5-carboxylate dehydrogenase 1"/>
    <property type="match status" value="1"/>
</dbReference>
<dbReference type="Gene3D" id="3.40.605.10">
    <property type="entry name" value="Aldehyde Dehydrogenase, Chain A, domain 1"/>
    <property type="match status" value="1"/>
</dbReference>
<dbReference type="Gene3D" id="3.40.309.10">
    <property type="entry name" value="Aldehyde Dehydrogenase, Chain A, domain 2"/>
    <property type="match status" value="1"/>
</dbReference>
<dbReference type="HAMAP" id="MF_00733">
    <property type="entry name" value="RocA"/>
    <property type="match status" value="1"/>
</dbReference>
<dbReference type="InterPro" id="IPR016161">
    <property type="entry name" value="Ald_DH/histidinol_DH"/>
</dbReference>
<dbReference type="InterPro" id="IPR016163">
    <property type="entry name" value="Ald_DH_C"/>
</dbReference>
<dbReference type="InterPro" id="IPR016160">
    <property type="entry name" value="Ald_DH_CS_CYS"/>
</dbReference>
<dbReference type="InterPro" id="IPR029510">
    <property type="entry name" value="Ald_DH_CS_GLU"/>
</dbReference>
<dbReference type="InterPro" id="IPR016162">
    <property type="entry name" value="Ald_DH_N"/>
</dbReference>
<dbReference type="InterPro" id="IPR015590">
    <property type="entry name" value="Aldehyde_DH_dom"/>
</dbReference>
<dbReference type="InterPro" id="IPR050485">
    <property type="entry name" value="Proline_metab_enzyme"/>
</dbReference>
<dbReference type="InterPro" id="IPR005932">
    <property type="entry name" value="RocA"/>
</dbReference>
<dbReference type="InterPro" id="IPR047597">
    <property type="entry name" value="RocA_bacillales"/>
</dbReference>
<dbReference type="NCBIfam" id="TIGR01237">
    <property type="entry name" value="D1pyr5carbox2"/>
    <property type="match status" value="1"/>
</dbReference>
<dbReference type="NCBIfam" id="NF002852">
    <property type="entry name" value="PRK03137.1"/>
    <property type="match status" value="1"/>
</dbReference>
<dbReference type="PANTHER" id="PTHR42862">
    <property type="entry name" value="DELTA-1-PYRROLINE-5-CARBOXYLATE DEHYDROGENASE 1, ISOFORM A-RELATED"/>
    <property type="match status" value="1"/>
</dbReference>
<dbReference type="PANTHER" id="PTHR42862:SF1">
    <property type="entry name" value="DELTA-1-PYRROLINE-5-CARBOXYLATE DEHYDROGENASE 2, ISOFORM A-RELATED"/>
    <property type="match status" value="1"/>
</dbReference>
<dbReference type="Pfam" id="PF00171">
    <property type="entry name" value="Aldedh"/>
    <property type="match status" value="1"/>
</dbReference>
<dbReference type="SUPFAM" id="SSF53720">
    <property type="entry name" value="ALDH-like"/>
    <property type="match status" value="1"/>
</dbReference>
<dbReference type="PROSITE" id="PS00070">
    <property type="entry name" value="ALDEHYDE_DEHYDR_CYS"/>
    <property type="match status" value="1"/>
</dbReference>
<dbReference type="PROSITE" id="PS00687">
    <property type="entry name" value="ALDEHYDE_DEHYDR_GLU"/>
    <property type="match status" value="1"/>
</dbReference>